<comment type="function">
    <text evidence="1">Ligates lysine onto the cytidine present at position 34 of the AUA codon-specific tRNA(Ile) that contains the anticodon CAU, in an ATP-dependent manner. Cytidine is converted to lysidine, thus changing the amino acid specificity of the tRNA from methionine to isoleucine.</text>
</comment>
<comment type="catalytic activity">
    <reaction evidence="1">
        <text>cytidine(34) in tRNA(Ile2) + L-lysine + ATP = lysidine(34) in tRNA(Ile2) + AMP + diphosphate + H(+)</text>
        <dbReference type="Rhea" id="RHEA:43744"/>
        <dbReference type="Rhea" id="RHEA-COMP:10625"/>
        <dbReference type="Rhea" id="RHEA-COMP:10670"/>
        <dbReference type="ChEBI" id="CHEBI:15378"/>
        <dbReference type="ChEBI" id="CHEBI:30616"/>
        <dbReference type="ChEBI" id="CHEBI:32551"/>
        <dbReference type="ChEBI" id="CHEBI:33019"/>
        <dbReference type="ChEBI" id="CHEBI:82748"/>
        <dbReference type="ChEBI" id="CHEBI:83665"/>
        <dbReference type="ChEBI" id="CHEBI:456215"/>
        <dbReference type="EC" id="6.3.4.19"/>
    </reaction>
</comment>
<comment type="subcellular location">
    <subcellularLocation>
        <location evidence="1">Cytoplasm</location>
    </subcellularLocation>
</comment>
<comment type="domain">
    <text>The N-terminal region contains the highly conserved SGGXDS motif, predicted to be a P-loop motif involved in ATP binding.</text>
</comment>
<comment type="similarity">
    <text evidence="1">Belongs to the tRNA(Ile)-lysidine synthase family.</text>
</comment>
<reference key="1">
    <citation type="journal article" date="2001" name="Proc. Natl. Acad. Sci. U.S.A.">
        <title>Analysis of the chromosome sequence of the legume symbiont Sinorhizobium meliloti strain 1021.</title>
        <authorList>
            <person name="Capela D."/>
            <person name="Barloy-Hubler F."/>
            <person name="Gouzy J."/>
            <person name="Bothe G."/>
            <person name="Ampe F."/>
            <person name="Batut J."/>
            <person name="Boistard P."/>
            <person name="Becker A."/>
            <person name="Boutry M."/>
            <person name="Cadieu E."/>
            <person name="Dreano S."/>
            <person name="Gloux S."/>
            <person name="Godrie T."/>
            <person name="Goffeau A."/>
            <person name="Kahn D."/>
            <person name="Kiss E."/>
            <person name="Lelaure V."/>
            <person name="Masuy D."/>
            <person name="Pohl T."/>
            <person name="Portetelle D."/>
            <person name="Puehler A."/>
            <person name="Purnelle B."/>
            <person name="Ramsperger U."/>
            <person name="Renard C."/>
            <person name="Thebault P."/>
            <person name="Vandenbol M."/>
            <person name="Weidner S."/>
            <person name="Galibert F."/>
        </authorList>
    </citation>
    <scope>NUCLEOTIDE SEQUENCE [LARGE SCALE GENOMIC DNA]</scope>
    <source>
        <strain>1021</strain>
    </source>
</reference>
<reference key="2">
    <citation type="journal article" date="2001" name="Science">
        <title>The composite genome of the legume symbiont Sinorhizobium meliloti.</title>
        <authorList>
            <person name="Galibert F."/>
            <person name="Finan T.M."/>
            <person name="Long S.R."/>
            <person name="Puehler A."/>
            <person name="Abola P."/>
            <person name="Ampe F."/>
            <person name="Barloy-Hubler F."/>
            <person name="Barnett M.J."/>
            <person name="Becker A."/>
            <person name="Boistard P."/>
            <person name="Bothe G."/>
            <person name="Boutry M."/>
            <person name="Bowser L."/>
            <person name="Buhrmester J."/>
            <person name="Cadieu E."/>
            <person name="Capela D."/>
            <person name="Chain P."/>
            <person name="Cowie A."/>
            <person name="Davis R.W."/>
            <person name="Dreano S."/>
            <person name="Federspiel N.A."/>
            <person name="Fisher R.F."/>
            <person name="Gloux S."/>
            <person name="Godrie T."/>
            <person name="Goffeau A."/>
            <person name="Golding B."/>
            <person name="Gouzy J."/>
            <person name="Gurjal M."/>
            <person name="Hernandez-Lucas I."/>
            <person name="Hong A."/>
            <person name="Huizar L."/>
            <person name="Hyman R.W."/>
            <person name="Jones T."/>
            <person name="Kahn D."/>
            <person name="Kahn M.L."/>
            <person name="Kalman S."/>
            <person name="Keating D.H."/>
            <person name="Kiss E."/>
            <person name="Komp C."/>
            <person name="Lelaure V."/>
            <person name="Masuy D."/>
            <person name="Palm C."/>
            <person name="Peck M.C."/>
            <person name="Pohl T.M."/>
            <person name="Portetelle D."/>
            <person name="Purnelle B."/>
            <person name="Ramsperger U."/>
            <person name="Surzycki R."/>
            <person name="Thebault P."/>
            <person name="Vandenbol M."/>
            <person name="Vorhoelter F.J."/>
            <person name="Weidner S."/>
            <person name="Wells D.H."/>
            <person name="Wong K."/>
            <person name="Yeh K.-C."/>
            <person name="Batut J."/>
        </authorList>
    </citation>
    <scope>NUCLEOTIDE SEQUENCE [LARGE SCALE GENOMIC DNA]</scope>
    <source>
        <strain>1021</strain>
    </source>
</reference>
<gene>
    <name evidence="1" type="primary">tilS</name>
    <name type="ordered locus">R02736</name>
    <name type="ORF">SMc02940</name>
</gene>
<protein>
    <recommendedName>
        <fullName evidence="1">tRNA(Ile)-lysidine synthase</fullName>
        <ecNumber evidence="1">6.3.4.19</ecNumber>
    </recommendedName>
    <alternativeName>
        <fullName evidence="1">tRNA(Ile)-2-lysyl-cytidine synthase</fullName>
    </alternativeName>
    <alternativeName>
        <fullName evidence="1">tRNA(Ile)-lysidine synthetase</fullName>
    </alternativeName>
</protein>
<feature type="chain" id="PRO_0000181753" description="tRNA(Ile)-lysidine synthase">
    <location>
        <begin position="1"/>
        <end position="453"/>
    </location>
</feature>
<feature type="binding site" evidence="1">
    <location>
        <begin position="27"/>
        <end position="32"/>
    </location>
    <ligand>
        <name>ATP</name>
        <dbReference type="ChEBI" id="CHEBI:30616"/>
    </ligand>
</feature>
<name>TILS_RHIME</name>
<evidence type="ECO:0000255" key="1">
    <source>
        <dbReference type="HAMAP-Rule" id="MF_01161"/>
    </source>
</evidence>
<dbReference type="EC" id="6.3.4.19" evidence="1"/>
<dbReference type="EMBL" id="AL591688">
    <property type="protein sequence ID" value="CAC47315.1"/>
    <property type="molecule type" value="Genomic_DNA"/>
</dbReference>
<dbReference type="RefSeq" id="NP_386842.1">
    <property type="nucleotide sequence ID" value="NC_003047.1"/>
</dbReference>
<dbReference type="RefSeq" id="WP_010970161.1">
    <property type="nucleotide sequence ID" value="NC_003047.1"/>
</dbReference>
<dbReference type="SMR" id="Q92JY3"/>
<dbReference type="EnsemblBacteria" id="CAC47315">
    <property type="protein sequence ID" value="CAC47315"/>
    <property type="gene ID" value="SMc02940"/>
</dbReference>
<dbReference type="KEGG" id="sme:SMc02940"/>
<dbReference type="PATRIC" id="fig|266834.11.peg.4244"/>
<dbReference type="eggNOG" id="COG0037">
    <property type="taxonomic scope" value="Bacteria"/>
</dbReference>
<dbReference type="HOGENOM" id="CLU_018869_3_3_5"/>
<dbReference type="OrthoDB" id="9807403at2"/>
<dbReference type="Proteomes" id="UP000001976">
    <property type="component" value="Chromosome"/>
</dbReference>
<dbReference type="GO" id="GO:0005737">
    <property type="term" value="C:cytoplasm"/>
    <property type="evidence" value="ECO:0007669"/>
    <property type="project" value="UniProtKB-SubCell"/>
</dbReference>
<dbReference type="GO" id="GO:0005524">
    <property type="term" value="F:ATP binding"/>
    <property type="evidence" value="ECO:0007669"/>
    <property type="project" value="UniProtKB-UniRule"/>
</dbReference>
<dbReference type="GO" id="GO:0032267">
    <property type="term" value="F:tRNA(Ile)-lysidine synthase activity"/>
    <property type="evidence" value="ECO:0007669"/>
    <property type="project" value="UniProtKB-EC"/>
</dbReference>
<dbReference type="GO" id="GO:0006400">
    <property type="term" value="P:tRNA modification"/>
    <property type="evidence" value="ECO:0007669"/>
    <property type="project" value="UniProtKB-UniRule"/>
</dbReference>
<dbReference type="CDD" id="cd01992">
    <property type="entry name" value="TilS_N"/>
    <property type="match status" value="1"/>
</dbReference>
<dbReference type="Gene3D" id="3.40.50.620">
    <property type="entry name" value="HUPs"/>
    <property type="match status" value="1"/>
</dbReference>
<dbReference type="HAMAP" id="MF_01161">
    <property type="entry name" value="tRNA_Ile_lys_synt"/>
    <property type="match status" value="1"/>
</dbReference>
<dbReference type="InterPro" id="IPR014729">
    <property type="entry name" value="Rossmann-like_a/b/a_fold"/>
</dbReference>
<dbReference type="InterPro" id="IPR011063">
    <property type="entry name" value="TilS/TtcA_N"/>
</dbReference>
<dbReference type="InterPro" id="IPR012094">
    <property type="entry name" value="tRNA_Ile_lys_synt"/>
</dbReference>
<dbReference type="InterPro" id="IPR012795">
    <property type="entry name" value="tRNA_Ile_lys_synt_N"/>
</dbReference>
<dbReference type="NCBIfam" id="TIGR02432">
    <property type="entry name" value="lysidine_TilS_N"/>
    <property type="match status" value="1"/>
</dbReference>
<dbReference type="PANTHER" id="PTHR43033">
    <property type="entry name" value="TRNA(ILE)-LYSIDINE SYNTHASE-RELATED"/>
    <property type="match status" value="1"/>
</dbReference>
<dbReference type="PANTHER" id="PTHR43033:SF1">
    <property type="entry name" value="TRNA(ILE)-LYSIDINE SYNTHASE-RELATED"/>
    <property type="match status" value="1"/>
</dbReference>
<dbReference type="Pfam" id="PF01171">
    <property type="entry name" value="ATP_bind_3"/>
    <property type="match status" value="1"/>
</dbReference>
<dbReference type="SUPFAM" id="SSF52402">
    <property type="entry name" value="Adenine nucleotide alpha hydrolases-like"/>
    <property type="match status" value="1"/>
</dbReference>
<proteinExistence type="inferred from homology"/>
<sequence>MPHAVLDTARNFLRSFITPRRILVAVSGGSDSMGLLVALHSAIAADERRGFSLAACTVDHALRPQSACEAEDVAAFCAALGIAHRICRWEGAKPSTGIQAAARNKRYELLAEAADALGADCIAIGHTRDDQQETVAMRIARGKGDGAGDGQGEGHGGAGMAASMLYGRRIWVLRPFLGLARAEIRSFLQARGVSWIDDPSNANPAFERVRVRARIATSGGMPTPLGNGRQRAASSARAAALIEKRIRVHEALVAEVSARHAGEIDDPDWRRALLTVASVLGGREHMPAFATVQRLSQFLRSGEPGRMTAGRVVFDRRASGLYLYREARNLPVLAVGPGRQGAWDGRFTVKSRGPAVTVAADASGRLWTKRLIDAGLPAGIAKRGSTVAPEIASTDGAGLAFGEAPAQVEYHIGLYDTFLPGFDRIMADAVAVSFGRDRYPAPPVHDVLIEMET</sequence>
<keyword id="KW-0067">ATP-binding</keyword>
<keyword id="KW-0963">Cytoplasm</keyword>
<keyword id="KW-0436">Ligase</keyword>
<keyword id="KW-0547">Nucleotide-binding</keyword>
<keyword id="KW-1185">Reference proteome</keyword>
<keyword id="KW-0819">tRNA processing</keyword>
<organism>
    <name type="scientific">Rhizobium meliloti (strain 1021)</name>
    <name type="common">Ensifer meliloti</name>
    <name type="synonym">Sinorhizobium meliloti</name>
    <dbReference type="NCBI Taxonomy" id="266834"/>
    <lineage>
        <taxon>Bacteria</taxon>
        <taxon>Pseudomonadati</taxon>
        <taxon>Pseudomonadota</taxon>
        <taxon>Alphaproteobacteria</taxon>
        <taxon>Hyphomicrobiales</taxon>
        <taxon>Rhizobiaceae</taxon>
        <taxon>Sinorhizobium/Ensifer group</taxon>
        <taxon>Sinorhizobium</taxon>
    </lineage>
</organism>
<accession>Q92JY3</accession>